<sequence length="576" mass="64059">MEVGRVKRVAGPVVQAVGLKASMYDLVLVGEEGLMSEVIGISGDKHIIQVYEDTSGIKPGEPVKETGGPLVAQLGPGILTQIYDGVQRPLPLLAEKSGDFISRGLFVDGVDHKKKWEFKPLVKKGDTVKPGQPIGEVQEQLLIKHKIMVPPKHKGGVVKEIYSGNFTVEETVCVLEDGSELTMLQKWPVRQARPVVRKLPPTIPLRTGQRVIDGFFPLAKGGTAAIPGGFGTGKTVMQQTLSKWSDVDIVIYVGCGERGNEMADLLHEFPELVDPRTNRPLLERSIVYANTSNMPVAAREASIYTGMTTAEYYRDMGYDVLMTADSTSRWAEAMRELASRLEEMPGEEGYPAYLAARLADFYERAGRAEVLAGGEGSVAVVGAVSPPGGDFTEPVTQNTLRIVKVFWALDSRLTQRRHFPSINWLDSYSLYEKDLESWYAENVAPDWNQLKRRAMAILQENAELEEIVMLVGSDALPEDQQLTLEVARMIINFWLAQSAFHPVDTFCPYKKQYDLLKAILTYRDYAFDALRRGVAVDQIKSVPSKDALAKLRMVEDYEPDLKKVMDQMKAEFEALK</sequence>
<gene>
    <name evidence="1" type="primary">atpA</name>
    <name type="ordered locus">Mthe_1609</name>
</gene>
<accession>A0B9K2</accession>
<protein>
    <recommendedName>
        <fullName evidence="1">A-type ATP synthase subunit A</fullName>
        <ecNumber evidence="1">7.1.2.2</ecNumber>
    </recommendedName>
</protein>
<keyword id="KW-0066">ATP synthesis</keyword>
<keyword id="KW-0067">ATP-binding</keyword>
<keyword id="KW-1003">Cell membrane</keyword>
<keyword id="KW-0375">Hydrogen ion transport</keyword>
<keyword id="KW-0406">Ion transport</keyword>
<keyword id="KW-0472">Membrane</keyword>
<keyword id="KW-0547">Nucleotide-binding</keyword>
<keyword id="KW-1185">Reference proteome</keyword>
<keyword id="KW-1278">Translocase</keyword>
<keyword id="KW-0813">Transport</keyword>
<name>AATA_METTP</name>
<feature type="chain" id="PRO_0000322480" description="A-type ATP synthase subunit A">
    <location>
        <begin position="1"/>
        <end position="576"/>
    </location>
</feature>
<feature type="binding site" evidence="1">
    <location>
        <begin position="228"/>
        <end position="235"/>
    </location>
    <ligand>
        <name>ATP</name>
        <dbReference type="ChEBI" id="CHEBI:30616"/>
    </ligand>
</feature>
<reference key="1">
    <citation type="submission" date="2006-10" db="EMBL/GenBank/DDBJ databases">
        <title>Complete sequence of Methanosaeta thermophila PT.</title>
        <authorList>
            <consortium name="US DOE Joint Genome Institute"/>
            <person name="Copeland A."/>
            <person name="Lucas S."/>
            <person name="Lapidus A."/>
            <person name="Barry K."/>
            <person name="Detter J.C."/>
            <person name="Glavina del Rio T."/>
            <person name="Hammon N."/>
            <person name="Israni S."/>
            <person name="Pitluck S."/>
            <person name="Chain P."/>
            <person name="Malfatti S."/>
            <person name="Shin M."/>
            <person name="Vergez L."/>
            <person name="Schmutz J."/>
            <person name="Larimer F."/>
            <person name="Land M."/>
            <person name="Hauser L."/>
            <person name="Kyrpides N."/>
            <person name="Kim E."/>
            <person name="Smith K.S."/>
            <person name="Ingram-Smith C."/>
            <person name="Richardson P."/>
        </authorList>
    </citation>
    <scope>NUCLEOTIDE SEQUENCE [LARGE SCALE GENOMIC DNA]</scope>
    <source>
        <strain>DSM 6194 / JCM 14653 / NBRC 101360 / PT</strain>
    </source>
</reference>
<organism>
    <name type="scientific">Methanothrix thermoacetophila (strain DSM 6194 / JCM 14653 / NBRC 101360 / PT)</name>
    <name type="common">Methanosaeta thermophila</name>
    <dbReference type="NCBI Taxonomy" id="349307"/>
    <lineage>
        <taxon>Archaea</taxon>
        <taxon>Methanobacteriati</taxon>
        <taxon>Methanobacteriota</taxon>
        <taxon>Stenosarchaea group</taxon>
        <taxon>Methanomicrobia</taxon>
        <taxon>Methanotrichales</taxon>
        <taxon>Methanotrichaceae</taxon>
        <taxon>Methanothrix</taxon>
    </lineage>
</organism>
<evidence type="ECO:0000255" key="1">
    <source>
        <dbReference type="HAMAP-Rule" id="MF_00309"/>
    </source>
</evidence>
<proteinExistence type="inferred from homology"/>
<dbReference type="EC" id="7.1.2.2" evidence="1"/>
<dbReference type="EMBL" id="CP000477">
    <property type="protein sequence ID" value="ABK15376.1"/>
    <property type="molecule type" value="Genomic_DNA"/>
</dbReference>
<dbReference type="RefSeq" id="WP_011696754.1">
    <property type="nucleotide sequence ID" value="NC_008553.1"/>
</dbReference>
<dbReference type="SMR" id="A0B9K2"/>
<dbReference type="STRING" id="349307.Mthe_1609"/>
<dbReference type="GeneID" id="4462040"/>
<dbReference type="KEGG" id="mtp:Mthe_1609"/>
<dbReference type="HOGENOM" id="CLU_008162_3_1_2"/>
<dbReference type="OrthoDB" id="115235at2157"/>
<dbReference type="Proteomes" id="UP000000674">
    <property type="component" value="Chromosome"/>
</dbReference>
<dbReference type="GO" id="GO:0005886">
    <property type="term" value="C:plasma membrane"/>
    <property type="evidence" value="ECO:0007669"/>
    <property type="project" value="UniProtKB-SubCell"/>
</dbReference>
<dbReference type="GO" id="GO:0005524">
    <property type="term" value="F:ATP binding"/>
    <property type="evidence" value="ECO:0007669"/>
    <property type="project" value="UniProtKB-UniRule"/>
</dbReference>
<dbReference type="GO" id="GO:0046933">
    <property type="term" value="F:proton-transporting ATP synthase activity, rotational mechanism"/>
    <property type="evidence" value="ECO:0007669"/>
    <property type="project" value="UniProtKB-UniRule"/>
</dbReference>
<dbReference type="GO" id="GO:0046961">
    <property type="term" value="F:proton-transporting ATPase activity, rotational mechanism"/>
    <property type="evidence" value="ECO:0007669"/>
    <property type="project" value="InterPro"/>
</dbReference>
<dbReference type="GO" id="GO:0042777">
    <property type="term" value="P:proton motive force-driven plasma membrane ATP synthesis"/>
    <property type="evidence" value="ECO:0007669"/>
    <property type="project" value="UniProtKB-UniRule"/>
</dbReference>
<dbReference type="CDD" id="cd18111">
    <property type="entry name" value="ATP-synt_V_A-type_alpha_C"/>
    <property type="match status" value="1"/>
</dbReference>
<dbReference type="CDD" id="cd01134">
    <property type="entry name" value="V_A-ATPase_A"/>
    <property type="match status" value="1"/>
</dbReference>
<dbReference type="FunFam" id="2.40.50.100:FF:000008">
    <property type="entry name" value="V-type proton ATPase catalytic subunit A"/>
    <property type="match status" value="1"/>
</dbReference>
<dbReference type="Gene3D" id="2.40.30.20">
    <property type="match status" value="1"/>
</dbReference>
<dbReference type="Gene3D" id="2.40.50.100">
    <property type="match status" value="1"/>
</dbReference>
<dbReference type="Gene3D" id="1.10.1140.10">
    <property type="entry name" value="Bovine Mitochondrial F1-atpase, Atp Synthase Beta Chain, Chain D, domain 3"/>
    <property type="match status" value="1"/>
</dbReference>
<dbReference type="Gene3D" id="3.40.50.300">
    <property type="entry name" value="P-loop containing nucleotide triphosphate hydrolases"/>
    <property type="match status" value="1"/>
</dbReference>
<dbReference type="HAMAP" id="MF_00309">
    <property type="entry name" value="ATP_synth_A_arch"/>
    <property type="match status" value="1"/>
</dbReference>
<dbReference type="InterPro" id="IPR055190">
    <property type="entry name" value="ATP-synt_VA_C"/>
</dbReference>
<dbReference type="InterPro" id="IPR031686">
    <property type="entry name" value="ATP-synth_a_Xtn"/>
</dbReference>
<dbReference type="InterPro" id="IPR023366">
    <property type="entry name" value="ATP_synth_asu-like_sf"/>
</dbReference>
<dbReference type="InterPro" id="IPR020003">
    <property type="entry name" value="ATPase_a/bsu_AS"/>
</dbReference>
<dbReference type="InterPro" id="IPR004100">
    <property type="entry name" value="ATPase_F1/V1/A1_a/bsu_N"/>
</dbReference>
<dbReference type="InterPro" id="IPR036121">
    <property type="entry name" value="ATPase_F1/V1/A1_a/bsu_N_sf"/>
</dbReference>
<dbReference type="InterPro" id="IPR000194">
    <property type="entry name" value="ATPase_F1/V1/A1_a/bsu_nucl-bd"/>
</dbReference>
<dbReference type="InterPro" id="IPR024034">
    <property type="entry name" value="ATPase_F1/V1_b/a_C"/>
</dbReference>
<dbReference type="InterPro" id="IPR027417">
    <property type="entry name" value="P-loop_NTPase"/>
</dbReference>
<dbReference type="InterPro" id="IPR022878">
    <property type="entry name" value="V-ATPase_asu"/>
</dbReference>
<dbReference type="NCBIfam" id="NF003220">
    <property type="entry name" value="PRK04192.1"/>
    <property type="match status" value="1"/>
</dbReference>
<dbReference type="PANTHER" id="PTHR43607:SF1">
    <property type="entry name" value="H(+)-TRANSPORTING TWO-SECTOR ATPASE"/>
    <property type="match status" value="1"/>
</dbReference>
<dbReference type="PANTHER" id="PTHR43607">
    <property type="entry name" value="V-TYPE PROTON ATPASE CATALYTIC SUBUNIT A"/>
    <property type="match status" value="1"/>
</dbReference>
<dbReference type="Pfam" id="PF00006">
    <property type="entry name" value="ATP-synt_ab"/>
    <property type="match status" value="1"/>
</dbReference>
<dbReference type="Pfam" id="PF02874">
    <property type="entry name" value="ATP-synt_ab_N"/>
    <property type="match status" value="1"/>
</dbReference>
<dbReference type="Pfam" id="PF16886">
    <property type="entry name" value="ATP-synt_ab_Xtn"/>
    <property type="match status" value="1"/>
</dbReference>
<dbReference type="Pfam" id="PF22919">
    <property type="entry name" value="ATP-synt_VA_C"/>
    <property type="match status" value="1"/>
</dbReference>
<dbReference type="SUPFAM" id="SSF47917">
    <property type="entry name" value="C-terminal domain of alpha and beta subunits of F1 ATP synthase"/>
    <property type="match status" value="1"/>
</dbReference>
<dbReference type="SUPFAM" id="SSF50615">
    <property type="entry name" value="N-terminal domain of alpha and beta subunits of F1 ATP synthase"/>
    <property type="match status" value="1"/>
</dbReference>
<dbReference type="SUPFAM" id="SSF52540">
    <property type="entry name" value="P-loop containing nucleoside triphosphate hydrolases"/>
    <property type="match status" value="1"/>
</dbReference>
<dbReference type="PROSITE" id="PS00152">
    <property type="entry name" value="ATPASE_ALPHA_BETA"/>
    <property type="match status" value="1"/>
</dbReference>
<comment type="function">
    <text evidence="1">Component of the A-type ATP synthase that produces ATP from ADP in the presence of a proton gradient across the membrane. The A chain is the catalytic subunit.</text>
</comment>
<comment type="catalytic activity">
    <reaction evidence="1">
        <text>ATP + H2O + 4 H(+)(in) = ADP + phosphate + 5 H(+)(out)</text>
        <dbReference type="Rhea" id="RHEA:57720"/>
        <dbReference type="ChEBI" id="CHEBI:15377"/>
        <dbReference type="ChEBI" id="CHEBI:15378"/>
        <dbReference type="ChEBI" id="CHEBI:30616"/>
        <dbReference type="ChEBI" id="CHEBI:43474"/>
        <dbReference type="ChEBI" id="CHEBI:456216"/>
        <dbReference type="EC" id="7.1.2.2"/>
    </reaction>
</comment>
<comment type="subunit">
    <text evidence="1">Has multiple subunits with at least A(3), B(3), C, D, E, F, H, I and proteolipid K(x).</text>
</comment>
<comment type="subcellular location">
    <subcellularLocation>
        <location evidence="1">Cell membrane</location>
        <topology evidence="1">Peripheral membrane protein</topology>
    </subcellularLocation>
</comment>
<comment type="similarity">
    <text evidence="1">Belongs to the ATPase alpha/beta chains family.</text>
</comment>